<evidence type="ECO:0000255" key="1"/>
<evidence type="ECO:0000305" key="2"/>
<sequence length="129" mass="15379">MRGVTETDKLANGIFHLVCLADLEFDYINPYDSASRINSVVLPEFIVQGVLCVFYLLTGHWFMTLLCLPYLYYNFHLYSKRQHLVDVTEIFNLLNWEKKKRLFKLAYIVLNLFLTIFWMIYSALDDYED</sequence>
<feature type="chain" id="PRO_0000398827" description="Probable protein cornichon homolog 2">
    <location>
        <begin position="1"/>
        <end position="129"/>
    </location>
</feature>
<feature type="transmembrane region" description="Helical" evidence="1">
    <location>
        <begin position="45"/>
        <end position="65"/>
    </location>
</feature>
<feature type="transmembrane region" description="Helical" evidence="1">
    <location>
        <begin position="105"/>
        <end position="125"/>
    </location>
</feature>
<dbReference type="EMBL" id="AC025416">
    <property type="protein sequence ID" value="AAF79631.1"/>
    <property type="status" value="ALT_SEQ"/>
    <property type="molecule type" value="Genomic_DNA"/>
</dbReference>
<dbReference type="EMBL" id="CP002684">
    <property type="protein sequence ID" value="AEE28868.1"/>
    <property type="molecule type" value="Genomic_DNA"/>
</dbReference>
<dbReference type="RefSeq" id="NP_563903.2">
    <property type="nucleotide sequence ID" value="NM_101106.2"/>
</dbReference>
<dbReference type="SMR" id="Q3EDD7"/>
<dbReference type="FunCoup" id="Q3EDD7">
    <property type="interactions" value="2389"/>
</dbReference>
<dbReference type="STRING" id="3702.Q3EDD7"/>
<dbReference type="PaxDb" id="3702-AT1G12340.1"/>
<dbReference type="EnsemblPlants" id="AT1G12340.1">
    <property type="protein sequence ID" value="AT1G12340.1"/>
    <property type="gene ID" value="AT1G12340"/>
</dbReference>
<dbReference type="GeneID" id="837788"/>
<dbReference type="Gramene" id="AT1G12340.1">
    <property type="protein sequence ID" value="AT1G12340.1"/>
    <property type="gene ID" value="AT1G12340"/>
</dbReference>
<dbReference type="KEGG" id="ath:AT1G12340"/>
<dbReference type="Araport" id="AT1G12340"/>
<dbReference type="TAIR" id="AT1G12340"/>
<dbReference type="eggNOG" id="KOG2729">
    <property type="taxonomic scope" value="Eukaryota"/>
</dbReference>
<dbReference type="HOGENOM" id="CLU_112942_3_1_1"/>
<dbReference type="InParanoid" id="Q3EDD7"/>
<dbReference type="OMA" id="CLMHLAL"/>
<dbReference type="OrthoDB" id="434393at2759"/>
<dbReference type="PhylomeDB" id="Q3EDD7"/>
<dbReference type="PRO" id="PR:Q3EDD7"/>
<dbReference type="Proteomes" id="UP000006548">
    <property type="component" value="Chromosome 1"/>
</dbReference>
<dbReference type="ExpressionAtlas" id="Q3EDD7">
    <property type="expression patterns" value="baseline and differential"/>
</dbReference>
<dbReference type="GO" id="GO:0016020">
    <property type="term" value="C:membrane"/>
    <property type="evidence" value="ECO:0007669"/>
    <property type="project" value="UniProtKB-SubCell"/>
</dbReference>
<dbReference type="GO" id="GO:0016192">
    <property type="term" value="P:vesicle-mediated transport"/>
    <property type="evidence" value="ECO:0007669"/>
    <property type="project" value="InterPro"/>
</dbReference>
<dbReference type="InterPro" id="IPR003377">
    <property type="entry name" value="Cornichon"/>
</dbReference>
<dbReference type="PANTHER" id="PTHR12290">
    <property type="entry name" value="CORNICHON-RELATED"/>
    <property type="match status" value="1"/>
</dbReference>
<dbReference type="Pfam" id="PF03311">
    <property type="entry name" value="Cornichon"/>
    <property type="match status" value="1"/>
</dbReference>
<dbReference type="SMART" id="SM01398">
    <property type="entry name" value="Cornichon"/>
    <property type="match status" value="1"/>
</dbReference>
<proteinExistence type="evidence at transcript level"/>
<organism>
    <name type="scientific">Arabidopsis thaliana</name>
    <name type="common">Mouse-ear cress</name>
    <dbReference type="NCBI Taxonomy" id="3702"/>
    <lineage>
        <taxon>Eukaryota</taxon>
        <taxon>Viridiplantae</taxon>
        <taxon>Streptophyta</taxon>
        <taxon>Embryophyta</taxon>
        <taxon>Tracheophyta</taxon>
        <taxon>Spermatophyta</taxon>
        <taxon>Magnoliopsida</taxon>
        <taxon>eudicotyledons</taxon>
        <taxon>Gunneridae</taxon>
        <taxon>Pentapetalae</taxon>
        <taxon>rosids</taxon>
        <taxon>malvids</taxon>
        <taxon>Brassicales</taxon>
        <taxon>Brassicaceae</taxon>
        <taxon>Camelineae</taxon>
        <taxon>Arabidopsis</taxon>
    </lineage>
</organism>
<keyword id="KW-0472">Membrane</keyword>
<keyword id="KW-1185">Reference proteome</keyword>
<keyword id="KW-0812">Transmembrane</keyword>
<keyword id="KW-1133">Transmembrane helix</keyword>
<comment type="subcellular location">
    <subcellularLocation>
        <location evidence="2">Membrane</location>
        <topology evidence="2">Multi-pass membrane protein</topology>
    </subcellularLocation>
</comment>
<comment type="similarity">
    <text evidence="2">Belongs to the cornichon family.</text>
</comment>
<comment type="caution">
    <text evidence="2">Lacks one of the three transmembrane regions, which are conserved features of the family.</text>
</comment>
<comment type="sequence caution" evidence="2">
    <conflict type="erroneous gene model prediction">
        <sequence resource="EMBL-CDS" id="AAF79631"/>
    </conflict>
    <text>The predicted gene has been split into 2 genes: At1g12340 and At1g12350.</text>
</comment>
<name>CNIH2_ARATH</name>
<accession>Q3EDD7</accession>
<accession>Q9LNB1</accession>
<reference key="1">
    <citation type="journal article" date="2000" name="Nature">
        <title>Sequence and analysis of chromosome 1 of the plant Arabidopsis thaliana.</title>
        <authorList>
            <person name="Theologis A."/>
            <person name="Ecker J.R."/>
            <person name="Palm C.J."/>
            <person name="Federspiel N.A."/>
            <person name="Kaul S."/>
            <person name="White O."/>
            <person name="Alonso J."/>
            <person name="Altafi H."/>
            <person name="Araujo R."/>
            <person name="Bowman C.L."/>
            <person name="Brooks S.Y."/>
            <person name="Buehler E."/>
            <person name="Chan A."/>
            <person name="Chao Q."/>
            <person name="Chen H."/>
            <person name="Cheuk R.F."/>
            <person name="Chin C.W."/>
            <person name="Chung M.K."/>
            <person name="Conn L."/>
            <person name="Conway A.B."/>
            <person name="Conway A.R."/>
            <person name="Creasy T.H."/>
            <person name="Dewar K."/>
            <person name="Dunn P."/>
            <person name="Etgu P."/>
            <person name="Feldblyum T.V."/>
            <person name="Feng J.-D."/>
            <person name="Fong B."/>
            <person name="Fujii C.Y."/>
            <person name="Gill J.E."/>
            <person name="Goldsmith A.D."/>
            <person name="Haas B."/>
            <person name="Hansen N.F."/>
            <person name="Hughes B."/>
            <person name="Huizar L."/>
            <person name="Hunter J.L."/>
            <person name="Jenkins J."/>
            <person name="Johnson-Hopson C."/>
            <person name="Khan S."/>
            <person name="Khaykin E."/>
            <person name="Kim C.J."/>
            <person name="Koo H.L."/>
            <person name="Kremenetskaia I."/>
            <person name="Kurtz D.B."/>
            <person name="Kwan A."/>
            <person name="Lam B."/>
            <person name="Langin-Hooper S."/>
            <person name="Lee A."/>
            <person name="Lee J.M."/>
            <person name="Lenz C.A."/>
            <person name="Li J.H."/>
            <person name="Li Y.-P."/>
            <person name="Lin X."/>
            <person name="Liu S.X."/>
            <person name="Liu Z.A."/>
            <person name="Luros J.S."/>
            <person name="Maiti R."/>
            <person name="Marziali A."/>
            <person name="Militscher J."/>
            <person name="Miranda M."/>
            <person name="Nguyen M."/>
            <person name="Nierman W.C."/>
            <person name="Osborne B.I."/>
            <person name="Pai G."/>
            <person name="Peterson J."/>
            <person name="Pham P.K."/>
            <person name="Rizzo M."/>
            <person name="Rooney T."/>
            <person name="Rowley D."/>
            <person name="Sakano H."/>
            <person name="Salzberg S.L."/>
            <person name="Schwartz J.R."/>
            <person name="Shinn P."/>
            <person name="Southwick A.M."/>
            <person name="Sun H."/>
            <person name="Tallon L.J."/>
            <person name="Tambunga G."/>
            <person name="Toriumi M.J."/>
            <person name="Town C.D."/>
            <person name="Utterback T."/>
            <person name="Van Aken S."/>
            <person name="Vaysberg M."/>
            <person name="Vysotskaia V.S."/>
            <person name="Walker M."/>
            <person name="Wu D."/>
            <person name="Yu G."/>
            <person name="Fraser C.M."/>
            <person name="Venter J.C."/>
            <person name="Davis R.W."/>
        </authorList>
    </citation>
    <scope>NUCLEOTIDE SEQUENCE [LARGE SCALE GENOMIC DNA]</scope>
    <source>
        <strain>cv. Columbia</strain>
    </source>
</reference>
<reference key="2">
    <citation type="journal article" date="2017" name="Plant J.">
        <title>Araport11: a complete reannotation of the Arabidopsis thaliana reference genome.</title>
        <authorList>
            <person name="Cheng C.Y."/>
            <person name="Krishnakumar V."/>
            <person name="Chan A.P."/>
            <person name="Thibaud-Nissen F."/>
            <person name="Schobel S."/>
            <person name="Town C.D."/>
        </authorList>
    </citation>
    <scope>GENOME REANNOTATION</scope>
    <source>
        <strain>cv. Columbia</strain>
    </source>
</reference>
<protein>
    <recommendedName>
        <fullName>Probable protein cornichon homolog 2</fullName>
    </recommendedName>
</protein>
<gene>
    <name type="ordered locus">At1g12340</name>
    <name type="ORF">F5O11.7</name>
</gene>